<keyword id="KW-0002">3D-structure</keyword>
<keyword id="KW-0027">Amidation</keyword>
<keyword id="KW-0878">Amphibian defense peptide</keyword>
<keyword id="KW-0044">Antibiotic</keyword>
<keyword id="KW-0929">Antimicrobial</keyword>
<keyword id="KW-0903">Direct protein sequencing</keyword>
<keyword id="KW-0472">Membrane</keyword>
<keyword id="KW-0964">Secreted</keyword>
<keyword id="KW-1052">Target cell membrane</keyword>
<keyword id="KW-1053">Target membrane</keyword>
<protein>
    <recommendedName>
        <fullName evidence="6">Uperin-3.5</fullName>
    </recommendedName>
</protein>
<evidence type="ECO:0000269" key="1">
    <source>
    </source>
</evidence>
<evidence type="ECO:0000269" key="2">
    <source>
    </source>
</evidence>
<evidence type="ECO:0000269" key="3">
    <source>
    </source>
</evidence>
<evidence type="ECO:0000269" key="4">
    <source ref="1"/>
</evidence>
<evidence type="ECO:0000269" key="5">
    <source ref="3"/>
</evidence>
<evidence type="ECO:0000303" key="6">
    <source ref="1"/>
</evidence>
<evidence type="ECO:0007744" key="7">
    <source>
        <dbReference type="PDB" id="6GS3"/>
    </source>
</evidence>
<evidence type="ECO:0007829" key="8">
    <source>
        <dbReference type="PDB" id="6GS3"/>
    </source>
</evidence>
<dbReference type="PDB" id="6GS3">
    <property type="method" value="X-ray"/>
    <property type="resolution" value="1.45 A"/>
    <property type="chains" value="A/B=1-17"/>
</dbReference>
<dbReference type="PDB" id="7QV5">
    <property type="method" value="EM"/>
    <property type="resolution" value="3.00 A"/>
    <property type="chains" value="A/B/C/D/E/F/G/H/I/J/K/L/M/N/O/P/Q/R/S/T/U/V/W/X/Y/Z/a=1-17"/>
</dbReference>
<dbReference type="PDB" id="7S3E">
    <property type="method" value="NMR"/>
    <property type="chains" value="A=1-17"/>
</dbReference>
<dbReference type="PDBsum" id="6GS3"/>
<dbReference type="PDBsum" id="7QV5"/>
<dbReference type="PDBsum" id="7S3E"/>
<dbReference type="EMDB" id="EMD-14167"/>
<dbReference type="SMR" id="P82042"/>
<dbReference type="GO" id="GO:0005576">
    <property type="term" value="C:extracellular region"/>
    <property type="evidence" value="ECO:0007669"/>
    <property type="project" value="UniProtKB-SubCell"/>
</dbReference>
<dbReference type="GO" id="GO:0016020">
    <property type="term" value="C:membrane"/>
    <property type="evidence" value="ECO:0007669"/>
    <property type="project" value="UniProtKB-KW"/>
</dbReference>
<dbReference type="GO" id="GO:0044218">
    <property type="term" value="C:other organism cell membrane"/>
    <property type="evidence" value="ECO:0000314"/>
    <property type="project" value="UniProtKB"/>
</dbReference>
<dbReference type="GO" id="GO:0042803">
    <property type="term" value="F:protein homodimerization activity"/>
    <property type="evidence" value="ECO:0000314"/>
    <property type="project" value="UniProtKB"/>
</dbReference>
<dbReference type="GO" id="GO:0051715">
    <property type="term" value="P:cytolysis in another organism"/>
    <property type="evidence" value="ECO:0000314"/>
    <property type="project" value="UniProtKB"/>
</dbReference>
<dbReference type="GO" id="GO:0050830">
    <property type="term" value="P:defense response to Gram-positive bacterium"/>
    <property type="evidence" value="ECO:0000314"/>
    <property type="project" value="UniProtKB"/>
</dbReference>
<dbReference type="InterPro" id="IPR012527">
    <property type="entry name" value="Antimicrobial_8"/>
</dbReference>
<dbReference type="Pfam" id="PF08103">
    <property type="entry name" value="Antimicrobial_8"/>
    <property type="match status" value="1"/>
</dbReference>
<feature type="peptide" id="PRO_0000043858" description="Uperin-3.5">
    <location>
        <begin position="1"/>
        <end position="17"/>
    </location>
</feature>
<feature type="site" description="Involved in inter-helical interactions along the fibril" evidence="3">
    <location>
        <position position="7"/>
    </location>
</feature>
<feature type="modified residue" description="Valine amide" evidence="4">
    <location>
        <position position="17"/>
    </location>
</feature>
<feature type="mutagenesis site" description="Loss of amyloid fibril formation but no effect on membrane disruption activity against bacterial mimetic membranes (DMPC:DMPG). Displays a significant increase in amyloid fibril formation; when associated with A-7." evidence="2 5">
    <original>G</original>
    <variation>L</variation>
    <location>
        <position position="1"/>
    </location>
</feature>
<feature type="mutagenesis site" description="Decreased amyloid fibril formation." evidence="2">
    <original>D</original>
    <variation>A</variation>
    <location>
        <position position="4"/>
    </location>
</feature>
<feature type="mutagenesis site" description="Loss of membrane disruption activity against bacterial mimetic membranes (DMPC:DMPG) and strong increase in amyloid fibril formation. Displays a significant increase in amyloid fibril formation; when associated with L-1." evidence="2 5">
    <original>R</original>
    <variation>A</variation>
    <location>
        <position position="7"/>
    </location>
</feature>
<feature type="mutagenesis site" description="No effect on membrane disruption activity against bacterial mimetic membranes (DMPC:DMPG) or amyloid fibril formation." evidence="5">
    <original>R</original>
    <variation>K</variation>
    <location>
        <position position="7"/>
    </location>
</feature>
<feature type="helix" evidence="8">
    <location>
        <begin position="2"/>
        <end position="13"/>
    </location>
</feature>
<accession>P82042</accession>
<organism>
    <name type="scientific">Uperoleia mjobergii</name>
    <name type="common">Mjoberg's toadlet</name>
    <name type="synonym">Pseudophryne mjobergii</name>
    <dbReference type="NCBI Taxonomy" id="104954"/>
    <lineage>
        <taxon>Eukaryota</taxon>
        <taxon>Metazoa</taxon>
        <taxon>Chordata</taxon>
        <taxon>Craniata</taxon>
        <taxon>Vertebrata</taxon>
        <taxon>Euteleostomi</taxon>
        <taxon>Amphibia</taxon>
        <taxon>Batrachia</taxon>
        <taxon>Anura</taxon>
        <taxon>Neobatrachia</taxon>
        <taxon>Myobatrachoidea</taxon>
        <taxon>Myobatrachidae</taxon>
        <taxon>Myobatrachinae</taxon>
        <taxon>Uperoleia</taxon>
    </lineage>
</organism>
<reference key="1">
    <citation type="journal article" date="1996" name="Aust. J. Chem.">
        <title>New antibiotic uperin peptides from the dorsal glands of the australian toadlet Uperoleia mjobergii.</title>
        <authorList>
            <person name="Bradford A.M."/>
            <person name="Bowie J.H."/>
            <person name="Tyler M.J."/>
            <person name="Wallace J.C."/>
        </authorList>
    </citation>
    <scope>PROTEIN SEQUENCE</scope>
    <scope>FUNCTION</scope>
    <scope>SUBCELLULAR LOCATION</scope>
    <scope>TISSUE SPECIFICITY</scope>
    <scope>AMIDATION AT VAL-17</scope>
    <scope>MASS SPECTROMETRY</scope>
    <source>
        <tissue>Skin secretion</tissue>
    </source>
</reference>
<reference key="2">
    <citation type="journal article" date="2016" name="ChemBioChem">
        <title>The Amyloid Fibril-Forming Properties of the Amphibian Antimicrobial Peptide Uperin 3.5.</title>
        <authorList>
            <person name="Calabrese A.N."/>
            <person name="Liu Y."/>
            <person name="Wang T."/>
            <person name="Musgrave I.F."/>
            <person name="Pukala T.L."/>
            <person name="Tabor R.F."/>
            <person name="Martin L.L."/>
            <person name="Carver J.A."/>
            <person name="Bowie J.H."/>
        </authorList>
    </citation>
    <scope>SYNTHESIS</scope>
    <scope>SUBUNIT</scope>
</reference>
<reference key="3">
    <citation type="journal article" date="2018" name="Pept. Sci.">
        <title>Amyloid aggregation and membrane activity of the antimicrobial peptide uperin 3.5.</title>
        <authorList>
            <person name="Martin L.L."/>
            <person name="Kubeil C."/>
            <person name="Piantavigna S."/>
            <person name="Tikkoo T."/>
            <person name="Gray N.P."/>
            <person name="John T."/>
            <person name="Calabrese A.N."/>
            <person name="Lui Y."/>
            <person name="Hong Y."/>
            <person name="Hossain M.A."/>
            <person name="Patil N.A."/>
            <person name="Abel B."/>
            <person name="Hoffmann R."/>
            <person name="Bowie J.H."/>
            <person name="Carver J.A."/>
        </authorList>
    </citation>
    <scope>FUNCTION</scope>
    <scope>SUBUNIT</scope>
    <scope>SUBCELLULAR LOCATION</scope>
    <scope>MUTAGENESIS OF GLY-1; ASP-4 AND ARG-7</scope>
</reference>
<reference key="4">
    <citation type="journal article" date="2019" name="Biochemistry">
        <title>The Kinetics of Amyloid Fibrillar Aggregation of Uperin 3.5 Is Directed by the Peptide's Secondary Structure.</title>
        <authorList>
            <person name="John T."/>
            <person name="Dealey T.J.A."/>
            <person name="Gray N.P."/>
            <person name="Patil N.A."/>
            <person name="Hossain M.A."/>
            <person name="Abel B."/>
            <person name="Carver J.A."/>
            <person name="Hong Y."/>
            <person name="Martin L.L."/>
        </authorList>
    </citation>
    <scope>SYNTHESIS</scope>
    <scope>SUBUNIT</scope>
    <scope>MUTAGENESIS OF GLY-1; ASP-4 AND ARG-7</scope>
</reference>
<reference evidence="7" key="5">
    <citation type="journal article" date="2021" name="Proc. Natl. Acad. Sci. U.S.A.">
        <title>The amphibian antimicrobial peptide uperin 3.5 is a cross-alpha/cross-beta chameleon functional amyloid.</title>
        <authorList>
            <person name="Salinas N."/>
            <person name="Tayeb-Fligelman E."/>
            <person name="Sammito M.D."/>
            <person name="Bloch D."/>
            <person name="Jelinek R."/>
            <person name="Noy D."/>
            <person name="Uson I."/>
            <person name="Landau M."/>
        </authorList>
    </citation>
    <scope>X-RAY CRYSTALLOGRAPHY (1.45 ANGSTROMS)</scope>
    <scope>SYNTHESIS</scope>
    <scope>FUNCTION</scope>
    <scope>BIOPHYSICOCHEMICAL PROPERTIES</scope>
    <scope>SUBUNIT</scope>
    <scope>SUBCELLULAR LOCATION</scope>
</reference>
<comment type="function">
    <text evidence="3 4 5">Shows antibacterial activity against B.cereus, L.lactis, L.innocua, M.luteus, S.aureus, P.multoci, S.hominis, S.epidermidis and S.uberis (PubMed:33431675, Ref.1). Strong activity against M.luteus (MIC=2 uM) compared to S.hominis, S.epidermidis and S.aureus (PubMed:33431675). Acts by inducing permeabilization of bacterial membranes (PubMed:33431675). Forms amyloid fibrils which, in the presence of bacteria, aggregate on the bacterial membrane leading to severe membrane damage and cell death (PubMed:33431675, Ref.3).</text>
</comment>
<comment type="biophysicochemical properties">
    <temperatureDependence>
        <text evidence="3">Thermostable (PubMed:33431675). Retains antibacterial activity against M.luteus after heat treatment at 60 degrees Celsius for 10 minutes (PubMed:33431675).</text>
    </temperatureDependence>
</comment>
<comment type="subunit">
    <text evidence="1 2 3 5">Monomer and homodimer (PubMed:26676975, PubMed:33431675). Assembles into amyloid fibrils (PubMed:26676975, PubMed:31385514, PubMed:33431675, Ref.3). Under lipid-free conditions, mostly forms fibrils with a cross-beta architecture, consisting of stacks of monomeric amphipathic beta-helices arranged in an antiparallel manner (PubMed:26676975, PubMed:31385514, PubMed:33431675). In the presence of bacteria or membrane lipids, fibrils switch to a cross-alpha conformation which may correlate with its antibacterial activity (PubMed:26676975, PubMed:31385514, PubMed:33431675, Ref.3).</text>
</comment>
<comment type="subcellular location">
    <subcellularLocation>
        <location evidence="4">Secreted</location>
    </subcellularLocation>
    <subcellularLocation>
        <location evidence="3 5">Target cell membrane</location>
    </subcellularLocation>
    <text evidence="3 5">Secreted monomers and fibrils appear to be able to interact with target cell membranes.</text>
</comment>
<comment type="tissue specificity">
    <text evidence="4">Expressed by the skin dorsal glands.</text>
</comment>
<comment type="mass spectrometry" mass="1779.0" method="FAB" evidence="4"/>
<comment type="miscellaneous">
    <text evidence="1 5">The amyloid fibrils are cytotoxic to PC12 neuronal cells, whereas the native peptide displays relatively weak cytotoxic activity (PubMed:26676975). Interacts with mammal mimetic membranes (DMPC:chol) leading to transmembrane pores (Ref.3).</text>
</comment>
<name>UPE35_UPEMJ</name>
<proteinExistence type="evidence at protein level"/>
<sequence length="17" mass="1781">GVGDLIRKAVSVIKNIV</sequence>